<feature type="chain" id="PRO_0000226559" description="Nucleoside diphosphate kinase">
    <location>
        <begin position="1"/>
        <end position="142"/>
    </location>
</feature>
<feature type="active site" description="Pros-phosphohistidine intermediate" evidence="1">
    <location>
        <position position="115"/>
    </location>
</feature>
<feature type="binding site" evidence="1">
    <location>
        <position position="9"/>
    </location>
    <ligand>
        <name>ATP</name>
        <dbReference type="ChEBI" id="CHEBI:30616"/>
    </ligand>
</feature>
<feature type="binding site" evidence="1">
    <location>
        <position position="57"/>
    </location>
    <ligand>
        <name>ATP</name>
        <dbReference type="ChEBI" id="CHEBI:30616"/>
    </ligand>
</feature>
<feature type="binding site" evidence="1">
    <location>
        <position position="85"/>
    </location>
    <ligand>
        <name>ATP</name>
        <dbReference type="ChEBI" id="CHEBI:30616"/>
    </ligand>
</feature>
<feature type="binding site" evidence="1">
    <location>
        <position position="91"/>
    </location>
    <ligand>
        <name>ATP</name>
        <dbReference type="ChEBI" id="CHEBI:30616"/>
    </ligand>
</feature>
<feature type="binding site" evidence="1">
    <location>
        <position position="102"/>
    </location>
    <ligand>
        <name>ATP</name>
        <dbReference type="ChEBI" id="CHEBI:30616"/>
    </ligand>
</feature>
<feature type="binding site" evidence="1">
    <location>
        <position position="112"/>
    </location>
    <ligand>
        <name>ATP</name>
        <dbReference type="ChEBI" id="CHEBI:30616"/>
    </ligand>
</feature>
<name>NDK_DEHMC</name>
<evidence type="ECO:0000255" key="1">
    <source>
        <dbReference type="HAMAP-Rule" id="MF_00451"/>
    </source>
</evidence>
<keyword id="KW-0067">ATP-binding</keyword>
<keyword id="KW-0963">Cytoplasm</keyword>
<keyword id="KW-0418">Kinase</keyword>
<keyword id="KW-0460">Magnesium</keyword>
<keyword id="KW-0479">Metal-binding</keyword>
<keyword id="KW-0546">Nucleotide metabolism</keyword>
<keyword id="KW-0547">Nucleotide-binding</keyword>
<keyword id="KW-0597">Phosphoprotein</keyword>
<keyword id="KW-0808">Transferase</keyword>
<reference key="1">
    <citation type="journal article" date="2005" name="Nat. Biotechnol.">
        <title>Genome sequence of the chlorinated compound-respiring bacterium Dehalococcoides species strain CBDB1.</title>
        <authorList>
            <person name="Kube M."/>
            <person name="Beck A."/>
            <person name="Zinder S.H."/>
            <person name="Kuhl H."/>
            <person name="Reinhardt R."/>
            <person name="Adrian L."/>
        </authorList>
    </citation>
    <scope>NUCLEOTIDE SEQUENCE [LARGE SCALE GENOMIC DNA]</scope>
    <source>
        <strain>CBDB1</strain>
    </source>
</reference>
<comment type="function">
    <text evidence="1">Major role in the synthesis of nucleoside triphosphates other than ATP. The ATP gamma phosphate is transferred to the NDP beta phosphate via a ping-pong mechanism, using a phosphorylated active-site intermediate.</text>
</comment>
<comment type="catalytic activity">
    <reaction evidence="1">
        <text>a 2'-deoxyribonucleoside 5'-diphosphate + ATP = a 2'-deoxyribonucleoside 5'-triphosphate + ADP</text>
        <dbReference type="Rhea" id="RHEA:44640"/>
        <dbReference type="ChEBI" id="CHEBI:30616"/>
        <dbReference type="ChEBI" id="CHEBI:61560"/>
        <dbReference type="ChEBI" id="CHEBI:73316"/>
        <dbReference type="ChEBI" id="CHEBI:456216"/>
        <dbReference type="EC" id="2.7.4.6"/>
    </reaction>
</comment>
<comment type="catalytic activity">
    <reaction evidence="1">
        <text>a ribonucleoside 5'-diphosphate + ATP = a ribonucleoside 5'-triphosphate + ADP</text>
        <dbReference type="Rhea" id="RHEA:18113"/>
        <dbReference type="ChEBI" id="CHEBI:30616"/>
        <dbReference type="ChEBI" id="CHEBI:57930"/>
        <dbReference type="ChEBI" id="CHEBI:61557"/>
        <dbReference type="ChEBI" id="CHEBI:456216"/>
        <dbReference type="EC" id="2.7.4.6"/>
    </reaction>
</comment>
<comment type="cofactor">
    <cofactor evidence="1">
        <name>Mg(2+)</name>
        <dbReference type="ChEBI" id="CHEBI:18420"/>
    </cofactor>
</comment>
<comment type="subunit">
    <text evidence="1">Homotetramer.</text>
</comment>
<comment type="subcellular location">
    <subcellularLocation>
        <location evidence="1">Cytoplasm</location>
    </subcellularLocation>
</comment>
<comment type="similarity">
    <text evidence="1">Belongs to the NDK family.</text>
</comment>
<sequence>MERTLLLVKPDGVNRGLSGEILGRMEKLGLKLIGLRMLQMDAVLADKHYAPHRARPFFKDLVTYITSGPITAAVFEGENAVEKMRKAMGATDPAKSEKGTVRGDLGINIEQNTVHGSDSAENAKHEISLFFSESELVNYDRR</sequence>
<organism>
    <name type="scientific">Dehalococcoides mccartyi (strain CBDB1)</name>
    <dbReference type="NCBI Taxonomy" id="255470"/>
    <lineage>
        <taxon>Bacteria</taxon>
        <taxon>Bacillati</taxon>
        <taxon>Chloroflexota</taxon>
        <taxon>Dehalococcoidia</taxon>
        <taxon>Dehalococcoidales</taxon>
        <taxon>Dehalococcoidaceae</taxon>
        <taxon>Dehalococcoides</taxon>
    </lineage>
</organism>
<proteinExistence type="inferred from homology"/>
<accession>Q3ZZF6</accession>
<dbReference type="EC" id="2.7.4.6" evidence="1"/>
<dbReference type="EMBL" id="AJ965256">
    <property type="protein sequence ID" value="CAI82559.1"/>
    <property type="molecule type" value="Genomic_DNA"/>
</dbReference>
<dbReference type="RefSeq" id="WP_011308916.1">
    <property type="nucleotide sequence ID" value="NC_007356.1"/>
</dbReference>
<dbReference type="SMR" id="Q3ZZF6"/>
<dbReference type="KEGG" id="deh:cbdbA343"/>
<dbReference type="HOGENOM" id="CLU_060216_6_3_0"/>
<dbReference type="Proteomes" id="UP000000433">
    <property type="component" value="Chromosome"/>
</dbReference>
<dbReference type="GO" id="GO:0005737">
    <property type="term" value="C:cytoplasm"/>
    <property type="evidence" value="ECO:0007669"/>
    <property type="project" value="UniProtKB-SubCell"/>
</dbReference>
<dbReference type="GO" id="GO:0005524">
    <property type="term" value="F:ATP binding"/>
    <property type="evidence" value="ECO:0007669"/>
    <property type="project" value="UniProtKB-UniRule"/>
</dbReference>
<dbReference type="GO" id="GO:0046872">
    <property type="term" value="F:metal ion binding"/>
    <property type="evidence" value="ECO:0007669"/>
    <property type="project" value="UniProtKB-KW"/>
</dbReference>
<dbReference type="GO" id="GO:0004550">
    <property type="term" value="F:nucleoside diphosphate kinase activity"/>
    <property type="evidence" value="ECO:0007669"/>
    <property type="project" value="UniProtKB-UniRule"/>
</dbReference>
<dbReference type="GO" id="GO:0006241">
    <property type="term" value="P:CTP biosynthetic process"/>
    <property type="evidence" value="ECO:0007669"/>
    <property type="project" value="UniProtKB-UniRule"/>
</dbReference>
<dbReference type="GO" id="GO:0006183">
    <property type="term" value="P:GTP biosynthetic process"/>
    <property type="evidence" value="ECO:0007669"/>
    <property type="project" value="UniProtKB-UniRule"/>
</dbReference>
<dbReference type="GO" id="GO:0006228">
    <property type="term" value="P:UTP biosynthetic process"/>
    <property type="evidence" value="ECO:0007669"/>
    <property type="project" value="UniProtKB-UniRule"/>
</dbReference>
<dbReference type="CDD" id="cd04413">
    <property type="entry name" value="NDPk_I"/>
    <property type="match status" value="1"/>
</dbReference>
<dbReference type="FunFam" id="3.30.70.141:FF:000025">
    <property type="entry name" value="Nucleoside diphosphate kinase"/>
    <property type="match status" value="1"/>
</dbReference>
<dbReference type="Gene3D" id="3.30.70.141">
    <property type="entry name" value="Nucleoside diphosphate kinase-like domain"/>
    <property type="match status" value="1"/>
</dbReference>
<dbReference type="HAMAP" id="MF_00451">
    <property type="entry name" value="NDP_kinase"/>
    <property type="match status" value="1"/>
</dbReference>
<dbReference type="InterPro" id="IPR034907">
    <property type="entry name" value="NDK-like_dom"/>
</dbReference>
<dbReference type="InterPro" id="IPR036850">
    <property type="entry name" value="NDK-like_dom_sf"/>
</dbReference>
<dbReference type="InterPro" id="IPR001564">
    <property type="entry name" value="Nucleoside_diP_kinase"/>
</dbReference>
<dbReference type="NCBIfam" id="NF001908">
    <property type="entry name" value="PRK00668.1"/>
    <property type="match status" value="1"/>
</dbReference>
<dbReference type="PANTHER" id="PTHR11349">
    <property type="entry name" value="NUCLEOSIDE DIPHOSPHATE KINASE"/>
    <property type="match status" value="1"/>
</dbReference>
<dbReference type="Pfam" id="PF00334">
    <property type="entry name" value="NDK"/>
    <property type="match status" value="1"/>
</dbReference>
<dbReference type="PRINTS" id="PR01243">
    <property type="entry name" value="NUCDPKINASE"/>
</dbReference>
<dbReference type="SMART" id="SM00562">
    <property type="entry name" value="NDK"/>
    <property type="match status" value="1"/>
</dbReference>
<dbReference type="SUPFAM" id="SSF54919">
    <property type="entry name" value="Nucleoside diphosphate kinase, NDK"/>
    <property type="match status" value="1"/>
</dbReference>
<dbReference type="PROSITE" id="PS51374">
    <property type="entry name" value="NDPK_LIKE"/>
    <property type="match status" value="1"/>
</dbReference>
<protein>
    <recommendedName>
        <fullName evidence="1">Nucleoside diphosphate kinase</fullName>
        <shortName evidence="1">NDK</shortName>
        <shortName evidence="1">NDP kinase</shortName>
        <ecNumber evidence="1">2.7.4.6</ecNumber>
    </recommendedName>
    <alternativeName>
        <fullName evidence="1">Nucleoside-2-P kinase</fullName>
    </alternativeName>
</protein>
<gene>
    <name evidence="1" type="primary">ndk</name>
    <name type="ordered locus">cbdbA343</name>
</gene>